<protein>
    <recommendedName>
        <fullName evidence="1">Glutamyl-tRNA(Gln) amidotransferase subunit A</fullName>
        <shortName evidence="1">Glu-ADT subunit A</shortName>
        <ecNumber evidence="1">6.3.5.7</ecNumber>
    </recommendedName>
</protein>
<accession>B2GDS6</accession>
<comment type="function">
    <text evidence="1">Allows the formation of correctly charged Gln-tRNA(Gln) through the transamidation of misacylated Glu-tRNA(Gln) in organisms which lack glutaminyl-tRNA synthetase. The reaction takes place in the presence of glutamine and ATP through an activated gamma-phospho-Glu-tRNA(Gln).</text>
</comment>
<comment type="catalytic activity">
    <reaction evidence="1">
        <text>L-glutamyl-tRNA(Gln) + L-glutamine + ATP + H2O = L-glutaminyl-tRNA(Gln) + L-glutamate + ADP + phosphate + H(+)</text>
        <dbReference type="Rhea" id="RHEA:17521"/>
        <dbReference type="Rhea" id="RHEA-COMP:9681"/>
        <dbReference type="Rhea" id="RHEA-COMP:9684"/>
        <dbReference type="ChEBI" id="CHEBI:15377"/>
        <dbReference type="ChEBI" id="CHEBI:15378"/>
        <dbReference type="ChEBI" id="CHEBI:29985"/>
        <dbReference type="ChEBI" id="CHEBI:30616"/>
        <dbReference type="ChEBI" id="CHEBI:43474"/>
        <dbReference type="ChEBI" id="CHEBI:58359"/>
        <dbReference type="ChEBI" id="CHEBI:78520"/>
        <dbReference type="ChEBI" id="CHEBI:78521"/>
        <dbReference type="ChEBI" id="CHEBI:456216"/>
        <dbReference type="EC" id="6.3.5.7"/>
    </reaction>
</comment>
<comment type="subunit">
    <text evidence="1">Heterotrimer of A, B and C subunits.</text>
</comment>
<comment type="similarity">
    <text evidence="1">Belongs to the amidase family. GatA subfamily.</text>
</comment>
<reference key="1">
    <citation type="journal article" date="2008" name="DNA Res.">
        <title>Comparative genome analysis of Lactobacillus reuteri and Lactobacillus fermentum reveal a genomic island for reuterin and cobalamin production.</title>
        <authorList>
            <person name="Morita H."/>
            <person name="Toh H."/>
            <person name="Fukuda S."/>
            <person name="Horikawa H."/>
            <person name="Oshima K."/>
            <person name="Suzuki T."/>
            <person name="Murakami M."/>
            <person name="Hisamatsu S."/>
            <person name="Kato Y."/>
            <person name="Takizawa T."/>
            <person name="Fukuoka H."/>
            <person name="Yoshimura T."/>
            <person name="Itoh K."/>
            <person name="O'Sullivan D.J."/>
            <person name="McKay L.L."/>
            <person name="Ohno H."/>
            <person name="Kikuchi J."/>
            <person name="Masaoka T."/>
            <person name="Hattori M."/>
        </authorList>
    </citation>
    <scope>NUCLEOTIDE SEQUENCE [LARGE SCALE GENOMIC DNA]</scope>
    <source>
        <strain>NBRC 3956 / LMG 18251</strain>
    </source>
</reference>
<proteinExistence type="inferred from homology"/>
<evidence type="ECO:0000255" key="1">
    <source>
        <dbReference type="HAMAP-Rule" id="MF_00120"/>
    </source>
</evidence>
<gene>
    <name evidence="1" type="primary">gatA</name>
    <name type="ordered locus">LAF_1472</name>
</gene>
<organism>
    <name type="scientific">Limosilactobacillus fermentum (strain NBRC 3956 / LMG 18251)</name>
    <name type="common">Lactobacillus fermentum</name>
    <dbReference type="NCBI Taxonomy" id="334390"/>
    <lineage>
        <taxon>Bacteria</taxon>
        <taxon>Bacillati</taxon>
        <taxon>Bacillota</taxon>
        <taxon>Bacilli</taxon>
        <taxon>Lactobacillales</taxon>
        <taxon>Lactobacillaceae</taxon>
        <taxon>Limosilactobacillus</taxon>
    </lineage>
</organism>
<feature type="chain" id="PRO_1000095142" description="Glutamyl-tRNA(Gln) amidotransferase subunit A">
    <location>
        <begin position="1"/>
        <end position="487"/>
    </location>
</feature>
<feature type="active site" description="Charge relay system" evidence="1">
    <location>
        <position position="77"/>
    </location>
</feature>
<feature type="active site" description="Charge relay system" evidence="1">
    <location>
        <position position="152"/>
    </location>
</feature>
<feature type="active site" description="Acyl-ester intermediate" evidence="1">
    <location>
        <position position="176"/>
    </location>
</feature>
<name>GATA_LIMF3</name>
<dbReference type="EC" id="6.3.5.7" evidence="1"/>
<dbReference type="EMBL" id="AP008937">
    <property type="protein sequence ID" value="BAG27808.1"/>
    <property type="molecule type" value="Genomic_DNA"/>
</dbReference>
<dbReference type="RefSeq" id="WP_012391579.1">
    <property type="nucleotide sequence ID" value="NC_010610.1"/>
</dbReference>
<dbReference type="SMR" id="B2GDS6"/>
<dbReference type="KEGG" id="lfe:LAF_1472"/>
<dbReference type="PATRIC" id="fig|334390.5.peg.1618"/>
<dbReference type="eggNOG" id="COG0154">
    <property type="taxonomic scope" value="Bacteria"/>
</dbReference>
<dbReference type="HOGENOM" id="CLU_009600_0_3_9"/>
<dbReference type="Proteomes" id="UP000001697">
    <property type="component" value="Chromosome"/>
</dbReference>
<dbReference type="GO" id="GO:0030956">
    <property type="term" value="C:glutamyl-tRNA(Gln) amidotransferase complex"/>
    <property type="evidence" value="ECO:0007669"/>
    <property type="project" value="InterPro"/>
</dbReference>
<dbReference type="GO" id="GO:0005524">
    <property type="term" value="F:ATP binding"/>
    <property type="evidence" value="ECO:0007669"/>
    <property type="project" value="UniProtKB-KW"/>
</dbReference>
<dbReference type="GO" id="GO:0050567">
    <property type="term" value="F:glutaminyl-tRNA synthase (glutamine-hydrolyzing) activity"/>
    <property type="evidence" value="ECO:0007669"/>
    <property type="project" value="UniProtKB-UniRule"/>
</dbReference>
<dbReference type="GO" id="GO:0006412">
    <property type="term" value="P:translation"/>
    <property type="evidence" value="ECO:0007669"/>
    <property type="project" value="UniProtKB-UniRule"/>
</dbReference>
<dbReference type="Gene3D" id="3.90.1300.10">
    <property type="entry name" value="Amidase signature (AS) domain"/>
    <property type="match status" value="1"/>
</dbReference>
<dbReference type="HAMAP" id="MF_00120">
    <property type="entry name" value="GatA"/>
    <property type="match status" value="1"/>
</dbReference>
<dbReference type="InterPro" id="IPR000120">
    <property type="entry name" value="Amidase"/>
</dbReference>
<dbReference type="InterPro" id="IPR020556">
    <property type="entry name" value="Amidase_CS"/>
</dbReference>
<dbReference type="InterPro" id="IPR023631">
    <property type="entry name" value="Amidase_dom"/>
</dbReference>
<dbReference type="InterPro" id="IPR036928">
    <property type="entry name" value="AS_sf"/>
</dbReference>
<dbReference type="InterPro" id="IPR004412">
    <property type="entry name" value="GatA"/>
</dbReference>
<dbReference type="NCBIfam" id="TIGR00132">
    <property type="entry name" value="gatA"/>
    <property type="match status" value="1"/>
</dbReference>
<dbReference type="PANTHER" id="PTHR11895:SF151">
    <property type="entry name" value="GLUTAMYL-TRNA(GLN) AMIDOTRANSFERASE SUBUNIT A"/>
    <property type="match status" value="1"/>
</dbReference>
<dbReference type="PANTHER" id="PTHR11895">
    <property type="entry name" value="TRANSAMIDASE"/>
    <property type="match status" value="1"/>
</dbReference>
<dbReference type="Pfam" id="PF01425">
    <property type="entry name" value="Amidase"/>
    <property type="match status" value="1"/>
</dbReference>
<dbReference type="SUPFAM" id="SSF75304">
    <property type="entry name" value="Amidase signature (AS) enzymes"/>
    <property type="match status" value="1"/>
</dbReference>
<dbReference type="PROSITE" id="PS00571">
    <property type="entry name" value="AMIDASES"/>
    <property type="match status" value="1"/>
</dbReference>
<keyword id="KW-0067">ATP-binding</keyword>
<keyword id="KW-0436">Ligase</keyword>
<keyword id="KW-0547">Nucleotide-binding</keyword>
<keyword id="KW-0648">Protein biosynthesis</keyword>
<keyword id="KW-1185">Reference proteome</keyword>
<sequence>MTFYGKDISGLHADLVAKKVSATELTKAAFDRIKATDDQVGAFLALNEEAALKQAAELDQAGIAEDQLLAGIPLAVKDNIVTKGLTTTAASKILENFKPVYDATVVEKLNAAGVINVGKVNLDEFAMGSSTENSAFKTTKNPWDLTRVPGGSSGGSAAAVAAGDVLGALGSDTGGSIRIPASFTGTVGMKPTYGRVSRWGLIAFGSSFDQIGWLTQSVKDNAILMSAIAGKDDRDMTSANQPVPDFAAGLNDQADIKGMKIAVPREYMEGLDDDVQEVIEASLKHLESLGATIDEVSLPHTKYGVPAYYILASSEASSNLQRFDGIRYGFRADDVKNLEDVYVKTRSQGFGDEVKLRIMLGTFSLSAGFYDAYFNKAAKVRRLIAQDFDDVLKDHDLIVGPTGTSTAFKIGAEIADPKQMYFNDVLTVTLNMAGLPGMSIPAGFSKDNGMPIGLQMIGKRFDEATIYKAGYVFEQTTDFHKQTPELG</sequence>